<organism>
    <name type="scientific">Oleidesulfovibrio alaskensis (strain ATCC BAA-1058 / DSM 17464 / G20)</name>
    <name type="common">Desulfovibrio alaskensis</name>
    <dbReference type="NCBI Taxonomy" id="207559"/>
    <lineage>
        <taxon>Bacteria</taxon>
        <taxon>Pseudomonadati</taxon>
        <taxon>Thermodesulfobacteriota</taxon>
        <taxon>Desulfovibrionia</taxon>
        <taxon>Desulfovibrionales</taxon>
        <taxon>Desulfovibrionaceae</taxon>
        <taxon>Oleidesulfovibrio</taxon>
    </lineage>
</organism>
<dbReference type="EC" id="2.2.1.7" evidence="1"/>
<dbReference type="EMBL" id="CP000112">
    <property type="protein sequence ID" value="ABB38997.2"/>
    <property type="molecule type" value="Genomic_DNA"/>
</dbReference>
<dbReference type="SMR" id="Q30Z99"/>
<dbReference type="STRING" id="207559.Dde_2200"/>
<dbReference type="KEGG" id="dde:Dde_2200"/>
<dbReference type="eggNOG" id="COG1154">
    <property type="taxonomic scope" value="Bacteria"/>
</dbReference>
<dbReference type="HOGENOM" id="CLU_009227_1_4_7"/>
<dbReference type="UniPathway" id="UPA00064">
    <property type="reaction ID" value="UER00091"/>
</dbReference>
<dbReference type="Proteomes" id="UP000002710">
    <property type="component" value="Chromosome"/>
</dbReference>
<dbReference type="GO" id="GO:0005829">
    <property type="term" value="C:cytosol"/>
    <property type="evidence" value="ECO:0007669"/>
    <property type="project" value="TreeGrafter"/>
</dbReference>
<dbReference type="GO" id="GO:0008661">
    <property type="term" value="F:1-deoxy-D-xylulose-5-phosphate synthase activity"/>
    <property type="evidence" value="ECO:0007669"/>
    <property type="project" value="UniProtKB-UniRule"/>
</dbReference>
<dbReference type="GO" id="GO:0000287">
    <property type="term" value="F:magnesium ion binding"/>
    <property type="evidence" value="ECO:0007669"/>
    <property type="project" value="UniProtKB-UniRule"/>
</dbReference>
<dbReference type="GO" id="GO:0030976">
    <property type="term" value="F:thiamine pyrophosphate binding"/>
    <property type="evidence" value="ECO:0007669"/>
    <property type="project" value="UniProtKB-UniRule"/>
</dbReference>
<dbReference type="GO" id="GO:0052865">
    <property type="term" value="P:1-deoxy-D-xylulose 5-phosphate biosynthetic process"/>
    <property type="evidence" value="ECO:0007669"/>
    <property type="project" value="UniProtKB-UniPathway"/>
</dbReference>
<dbReference type="GO" id="GO:0019288">
    <property type="term" value="P:isopentenyl diphosphate biosynthetic process, methylerythritol 4-phosphate pathway"/>
    <property type="evidence" value="ECO:0007669"/>
    <property type="project" value="TreeGrafter"/>
</dbReference>
<dbReference type="GO" id="GO:0016114">
    <property type="term" value="P:terpenoid biosynthetic process"/>
    <property type="evidence" value="ECO:0007669"/>
    <property type="project" value="UniProtKB-UniRule"/>
</dbReference>
<dbReference type="GO" id="GO:0009228">
    <property type="term" value="P:thiamine biosynthetic process"/>
    <property type="evidence" value="ECO:0007669"/>
    <property type="project" value="UniProtKB-UniRule"/>
</dbReference>
<dbReference type="CDD" id="cd02007">
    <property type="entry name" value="TPP_DXS"/>
    <property type="match status" value="1"/>
</dbReference>
<dbReference type="CDD" id="cd07033">
    <property type="entry name" value="TPP_PYR_DXS_TK_like"/>
    <property type="match status" value="1"/>
</dbReference>
<dbReference type="FunFam" id="3.40.50.920:FF:000002">
    <property type="entry name" value="1-deoxy-D-xylulose-5-phosphate synthase"/>
    <property type="match status" value="1"/>
</dbReference>
<dbReference type="FunFam" id="3.40.50.970:FF:000005">
    <property type="entry name" value="1-deoxy-D-xylulose-5-phosphate synthase"/>
    <property type="match status" value="1"/>
</dbReference>
<dbReference type="Gene3D" id="3.40.50.920">
    <property type="match status" value="1"/>
</dbReference>
<dbReference type="Gene3D" id="3.40.50.970">
    <property type="match status" value="2"/>
</dbReference>
<dbReference type="HAMAP" id="MF_00315">
    <property type="entry name" value="DXP_synth"/>
    <property type="match status" value="1"/>
</dbReference>
<dbReference type="InterPro" id="IPR005477">
    <property type="entry name" value="Dxylulose-5-P_synthase"/>
</dbReference>
<dbReference type="InterPro" id="IPR029061">
    <property type="entry name" value="THDP-binding"/>
</dbReference>
<dbReference type="InterPro" id="IPR009014">
    <property type="entry name" value="Transketo_C/PFOR_II"/>
</dbReference>
<dbReference type="InterPro" id="IPR005475">
    <property type="entry name" value="Transketolase-like_Pyr-bd"/>
</dbReference>
<dbReference type="InterPro" id="IPR020826">
    <property type="entry name" value="Transketolase_BS"/>
</dbReference>
<dbReference type="InterPro" id="IPR033248">
    <property type="entry name" value="Transketolase_C"/>
</dbReference>
<dbReference type="NCBIfam" id="TIGR00204">
    <property type="entry name" value="dxs"/>
    <property type="match status" value="1"/>
</dbReference>
<dbReference type="NCBIfam" id="NF003933">
    <property type="entry name" value="PRK05444.2-2"/>
    <property type="match status" value="1"/>
</dbReference>
<dbReference type="PANTHER" id="PTHR43322">
    <property type="entry name" value="1-D-DEOXYXYLULOSE 5-PHOSPHATE SYNTHASE-RELATED"/>
    <property type="match status" value="1"/>
</dbReference>
<dbReference type="PANTHER" id="PTHR43322:SF5">
    <property type="entry name" value="1-DEOXY-D-XYLULOSE-5-PHOSPHATE SYNTHASE, CHLOROPLASTIC"/>
    <property type="match status" value="1"/>
</dbReference>
<dbReference type="Pfam" id="PF13292">
    <property type="entry name" value="DXP_synthase_N"/>
    <property type="match status" value="1"/>
</dbReference>
<dbReference type="Pfam" id="PF02779">
    <property type="entry name" value="Transket_pyr"/>
    <property type="match status" value="1"/>
</dbReference>
<dbReference type="Pfam" id="PF02780">
    <property type="entry name" value="Transketolase_C"/>
    <property type="match status" value="1"/>
</dbReference>
<dbReference type="SMART" id="SM00861">
    <property type="entry name" value="Transket_pyr"/>
    <property type="match status" value="1"/>
</dbReference>
<dbReference type="SUPFAM" id="SSF52518">
    <property type="entry name" value="Thiamin diphosphate-binding fold (THDP-binding)"/>
    <property type="match status" value="2"/>
</dbReference>
<dbReference type="SUPFAM" id="SSF52922">
    <property type="entry name" value="TK C-terminal domain-like"/>
    <property type="match status" value="1"/>
</dbReference>
<dbReference type="PROSITE" id="PS00802">
    <property type="entry name" value="TRANSKETOLASE_2"/>
    <property type="match status" value="1"/>
</dbReference>
<comment type="function">
    <text evidence="1">Catalyzes the acyloin condensation reaction between C atoms 2 and 3 of pyruvate and glyceraldehyde 3-phosphate to yield 1-deoxy-D-xylulose-5-phosphate (DXP).</text>
</comment>
<comment type="catalytic activity">
    <reaction evidence="1">
        <text>D-glyceraldehyde 3-phosphate + pyruvate + H(+) = 1-deoxy-D-xylulose 5-phosphate + CO2</text>
        <dbReference type="Rhea" id="RHEA:12605"/>
        <dbReference type="ChEBI" id="CHEBI:15361"/>
        <dbReference type="ChEBI" id="CHEBI:15378"/>
        <dbReference type="ChEBI" id="CHEBI:16526"/>
        <dbReference type="ChEBI" id="CHEBI:57792"/>
        <dbReference type="ChEBI" id="CHEBI:59776"/>
        <dbReference type="EC" id="2.2.1.7"/>
    </reaction>
</comment>
<comment type="cofactor">
    <cofactor evidence="1">
        <name>Mg(2+)</name>
        <dbReference type="ChEBI" id="CHEBI:18420"/>
    </cofactor>
    <text evidence="1">Binds 1 Mg(2+) ion per subunit.</text>
</comment>
<comment type="cofactor">
    <cofactor evidence="1">
        <name>thiamine diphosphate</name>
        <dbReference type="ChEBI" id="CHEBI:58937"/>
    </cofactor>
    <text evidence="1">Binds 1 thiamine pyrophosphate per subunit.</text>
</comment>
<comment type="pathway">
    <text evidence="1">Metabolic intermediate biosynthesis; 1-deoxy-D-xylulose 5-phosphate biosynthesis; 1-deoxy-D-xylulose 5-phosphate from D-glyceraldehyde 3-phosphate and pyruvate: step 1/1.</text>
</comment>
<comment type="subunit">
    <text evidence="1">Homodimer.</text>
</comment>
<comment type="similarity">
    <text evidence="1">Belongs to the transketolase family. DXPS subfamily.</text>
</comment>
<feature type="chain" id="PRO_0000256411" description="1-deoxy-D-xylulose-5-phosphate synthase">
    <location>
        <begin position="1"/>
        <end position="638"/>
    </location>
</feature>
<feature type="binding site" evidence="1">
    <location>
        <position position="81"/>
    </location>
    <ligand>
        <name>thiamine diphosphate</name>
        <dbReference type="ChEBI" id="CHEBI:58937"/>
    </ligand>
</feature>
<feature type="binding site" evidence="1">
    <location>
        <begin position="122"/>
        <end position="124"/>
    </location>
    <ligand>
        <name>thiamine diphosphate</name>
        <dbReference type="ChEBI" id="CHEBI:58937"/>
    </ligand>
</feature>
<feature type="binding site" evidence="1">
    <location>
        <position position="153"/>
    </location>
    <ligand>
        <name>Mg(2+)</name>
        <dbReference type="ChEBI" id="CHEBI:18420"/>
    </ligand>
</feature>
<feature type="binding site" evidence="1">
    <location>
        <begin position="154"/>
        <end position="155"/>
    </location>
    <ligand>
        <name>thiamine diphosphate</name>
        <dbReference type="ChEBI" id="CHEBI:58937"/>
    </ligand>
</feature>
<feature type="binding site" evidence="1">
    <location>
        <position position="182"/>
    </location>
    <ligand>
        <name>Mg(2+)</name>
        <dbReference type="ChEBI" id="CHEBI:18420"/>
    </ligand>
</feature>
<feature type="binding site" evidence="1">
    <location>
        <position position="182"/>
    </location>
    <ligand>
        <name>thiamine diphosphate</name>
        <dbReference type="ChEBI" id="CHEBI:58937"/>
    </ligand>
</feature>
<feature type="binding site" evidence="1">
    <location>
        <position position="293"/>
    </location>
    <ligand>
        <name>thiamine diphosphate</name>
        <dbReference type="ChEBI" id="CHEBI:58937"/>
    </ligand>
</feature>
<feature type="binding site" evidence="1">
    <location>
        <position position="377"/>
    </location>
    <ligand>
        <name>thiamine diphosphate</name>
        <dbReference type="ChEBI" id="CHEBI:58937"/>
    </ligand>
</feature>
<name>DXS_OLEA2</name>
<gene>
    <name evidence="1" type="primary">dxs</name>
    <name type="ordered locus">Dde_2200</name>
</gene>
<reference key="1">
    <citation type="journal article" date="2011" name="J. Bacteriol.">
        <title>Complete genome sequence and updated annotation of Desulfovibrio alaskensis G20.</title>
        <authorList>
            <person name="Hauser L.J."/>
            <person name="Land M.L."/>
            <person name="Brown S.D."/>
            <person name="Larimer F."/>
            <person name="Keller K.L."/>
            <person name="Rapp-Giles B.J."/>
            <person name="Price M.N."/>
            <person name="Lin M."/>
            <person name="Bruce D.C."/>
            <person name="Detter J.C."/>
            <person name="Tapia R."/>
            <person name="Han C.S."/>
            <person name="Goodwin L.A."/>
            <person name="Cheng J.F."/>
            <person name="Pitluck S."/>
            <person name="Copeland A."/>
            <person name="Lucas S."/>
            <person name="Nolan M."/>
            <person name="Lapidus A.L."/>
            <person name="Palumbo A.V."/>
            <person name="Wall J.D."/>
        </authorList>
    </citation>
    <scope>NUCLEOTIDE SEQUENCE [LARGE SCALE GENOMIC DNA]</scope>
    <source>
        <strain>ATCC BAA-1058 / DSM 17464 / G20</strain>
    </source>
</reference>
<keyword id="KW-0414">Isoprene biosynthesis</keyword>
<keyword id="KW-0460">Magnesium</keyword>
<keyword id="KW-0479">Metal-binding</keyword>
<keyword id="KW-1185">Reference proteome</keyword>
<keyword id="KW-0784">Thiamine biosynthesis</keyword>
<keyword id="KW-0786">Thiamine pyrophosphate</keyword>
<keyword id="KW-0808">Transferase</keyword>
<protein>
    <recommendedName>
        <fullName evidence="1">1-deoxy-D-xylulose-5-phosphate synthase</fullName>
        <ecNumber evidence="1">2.2.1.7</ecNumber>
    </recommendedName>
    <alternativeName>
        <fullName evidence="1">1-deoxyxylulose-5-phosphate synthase</fullName>
        <shortName evidence="1">DXP synthase</shortName>
        <shortName evidence="1">DXPS</shortName>
    </alternativeName>
</protein>
<evidence type="ECO:0000255" key="1">
    <source>
        <dbReference type="HAMAP-Rule" id="MF_00315"/>
    </source>
</evidence>
<proteinExistence type="inferred from homology"/>
<accession>Q30Z99</accession>
<sequence>MSQTGMTIDNVLDSIQHPTDVAKLDADQLRQLADELRERIIGTVSQNGGHLAPSLGVVELTLALLSVFNPDKDKFVWDVGHQAYAWKLLTGRRDEFSTLRQYQGISGFPKMAESPYDHFGVGHSSTSISAAAGMAMARDLAGDDNDVIAIIGDGSMTAGLAFEGLNQAGHQGRRLLVILNDNEMSISKNVGALSLFLSRNLSSRWVRRMKRDVETWLKSVPGIGEEMLNYAKRSEHSLKSFFTPGMLFEAFRFNYVGPVDGHDVRNLAKVMQMARALDEPVLLHVLTKKGKGYEPAESNPTYFHGVGRFELETGAACKFVDSDSLPSYTEVFGSTLCSLAEKDERVIAITAAMPEGTGVGEFSRRFPDRFVDVGICEQHAVTFAAGLAAQGFRPVVAIYSTFLQRSYDQIVHDVCLQKLPVTFCLDRGGLVGEDGPTHHGAFDLSYLRHIPNLTIIAPKDEAELQQAMKTALAGEGPVAIRYPRGIGVGACLSADPGVLEHGRGELLKKGADVAVIAVGSRVHPALAVAEEIERSTGKAVSVFNARFVKPLDAEQLVALARSHDSLLLLEENTTTGGFSSGVLELLADHDCLAGVHVRRLGLPDDFVTHGTQKQLRKLTGIDRAAIRRTLLEMLGLQE</sequence>